<protein>
    <recommendedName>
        <fullName>Tumor necrosis factor</fullName>
    </recommendedName>
    <alternativeName>
        <fullName>Cachectin</fullName>
    </alternativeName>
    <alternativeName>
        <fullName>TNF-alpha</fullName>
    </alternativeName>
    <alternativeName>
        <fullName>Tumor necrosis factor ligand superfamily member 2</fullName>
        <shortName>TNF-a</shortName>
    </alternativeName>
    <component>
        <recommendedName>
            <fullName>Tumor necrosis factor, membrane form</fullName>
        </recommendedName>
        <alternativeName>
            <fullName>N-terminal fragment</fullName>
            <shortName>NTF</shortName>
        </alternativeName>
    </component>
    <component>
        <recommendedName>
            <fullName>Intracellular domain 1</fullName>
            <shortName>ICD1</shortName>
        </recommendedName>
    </component>
    <component>
        <recommendedName>
            <fullName>Intracellular domain 2</fullName>
            <shortName>ICD2</shortName>
        </recommendedName>
    </component>
    <component>
        <recommendedName>
            <fullName>C-domain 1</fullName>
        </recommendedName>
    </component>
    <component>
        <recommendedName>
            <fullName>C-domain 2</fullName>
        </recommendedName>
    </component>
    <component>
        <recommendedName>
            <fullName>Tumor necrosis factor, soluble form</fullName>
        </recommendedName>
    </component>
</protein>
<proteinExistence type="evidence at transcript level"/>
<comment type="function">
    <text evidence="2 3">Cytokine that binds to TNFRSF1A/TNFR1 and TNFRSF1B/TNFBR. It is mainly secreted by macrophages and can induce cell death of certain tumor cell lines. It is potent pyrogen causing fever by direct action or by stimulation of interleukin-1 secretion and is implicated in the induction of cachexia, Under certain conditions it can stimulate cell proliferation and induce cell differentiation (By similarity). Induces insulin resistance in adipocytes via inhibition of insulin-induced IRS1 tyrosine phosphorylation and insulin-induced glucose uptake. Induces GKAP42 protein degradation in adipocytes which is partially responsible for TNF-induced insulin resistance (By similarity). Plays a role in angiogenesis by inducing VEGF production synergistically with IL1B and IL6 (By similarity). Promotes osteoclastogenesis and therefore mediates bone resorption (By similarity).</text>
</comment>
<comment type="function">
    <text evidence="2">The TNF intracellular domain (ICD) form induces IL12 production in dendritic cells.</text>
</comment>
<comment type="subunit">
    <text evidence="1">Homotrimer. Interacts with SPPL2B (By similarity).</text>
</comment>
<comment type="subcellular location">
    <subcellularLocation>
        <location evidence="1">Cell membrane</location>
        <topology evidence="1">Single-pass type II membrane protein</topology>
    </subcellularLocation>
</comment>
<comment type="subcellular location">
    <molecule>Tumor necrosis factor, membrane form</molecule>
    <subcellularLocation>
        <location evidence="1">Membrane</location>
        <topology evidence="1">Single-pass type II membrane protein</topology>
    </subcellularLocation>
</comment>
<comment type="subcellular location">
    <molecule>Tumor necrosis factor, soluble form</molecule>
    <subcellularLocation>
        <location evidence="1">Secreted</location>
    </subcellularLocation>
</comment>
<comment type="subcellular location">
    <molecule>C-domain 1</molecule>
    <subcellularLocation>
        <location evidence="1">Secreted</location>
    </subcellularLocation>
</comment>
<comment type="subcellular location">
    <molecule>C-domain 2</molecule>
    <subcellularLocation>
        <location evidence="1">Secreted</location>
    </subcellularLocation>
</comment>
<comment type="PTM">
    <text evidence="1">The soluble form derives from the membrane form by proteolytic processing. The membrane-bound form is further proteolytically processed by SPPL2A or SPPL2B through regulated intramembrane proteolysis producing TNF intracellular domains (ICD1 and ICD2) released in the cytosol and TNF C-domain 1 and C-domain 2 secreted into the extracellular space (By similarity).</text>
</comment>
<comment type="PTM">
    <text evidence="1">The membrane form, but not the soluble form, is phosphorylated on serine residues. Dephosphorylation of the membrane form occurs by binding to soluble TNFRSF1A/TNFR1 (By similarity).</text>
</comment>
<comment type="PTM">
    <text evidence="1">O-glycosylated; glycans contain galactose, N-acetylgalactosamine and N-acetylneuraminic acid.</text>
</comment>
<comment type="PTM">
    <molecule>Tumor necrosis factor, soluble form</molecule>
    <text evidence="2">The soluble form is demyristoylated by SIRT6, promoting its secretion.</text>
</comment>
<comment type="similarity">
    <text evidence="6">Belongs to the tumor necrosis factor family.</text>
</comment>
<organism>
    <name type="scientific">Bubalus carabanensis</name>
    <name type="common">Swamp type water buffalo</name>
    <name type="synonym">Bubalus bubalis carabanensis</name>
    <dbReference type="NCBI Taxonomy" id="3119969"/>
    <lineage>
        <taxon>Eukaryota</taxon>
        <taxon>Metazoa</taxon>
        <taxon>Chordata</taxon>
        <taxon>Craniata</taxon>
        <taxon>Vertebrata</taxon>
        <taxon>Euteleostomi</taxon>
        <taxon>Mammalia</taxon>
        <taxon>Eutheria</taxon>
        <taxon>Laurasiatheria</taxon>
        <taxon>Artiodactyla</taxon>
        <taxon>Ruminantia</taxon>
        <taxon>Pecora</taxon>
        <taxon>Bovidae</taxon>
        <taxon>Bovinae</taxon>
        <taxon>Bubalus</taxon>
    </lineage>
</organism>
<gene>
    <name type="primary">TNF</name>
    <name type="synonym">TNFA</name>
    <name type="synonym">TNFSF2</name>
</gene>
<feature type="chain" id="PRO_0000254895" description="Tumor necrosis factor, membrane form">
    <location>
        <begin position="1"/>
        <end position="234"/>
    </location>
</feature>
<feature type="chain" id="PRO_0000417187" description="Intracellular domain 1" evidence="1">
    <location>
        <begin position="1"/>
        <end position="39"/>
    </location>
</feature>
<feature type="chain" id="PRO_0000417188" description="Intracellular domain 2" evidence="1">
    <location>
        <begin position="1"/>
        <end position="35"/>
    </location>
</feature>
<feature type="chain" id="PRO_0000417189" description="C-domain 1" evidence="1">
    <location>
        <begin position="50"/>
        <end status="unknown"/>
    </location>
</feature>
<feature type="chain" id="PRO_0000417190" description="C-domain 2" evidence="1">
    <location>
        <begin position="52"/>
        <end status="unknown"/>
    </location>
</feature>
<feature type="chain" id="PRO_0000254896" description="Tumor necrosis factor, soluble form" evidence="1">
    <location>
        <begin position="77"/>
        <end position="234"/>
    </location>
</feature>
<feature type="topological domain" description="Cytoplasmic" evidence="4">
    <location>
        <begin position="1"/>
        <end position="33"/>
    </location>
</feature>
<feature type="transmembrane region" description="Helical; Signal-anchor for type II membrane protein" evidence="1">
    <location>
        <begin position="34"/>
        <end position="56"/>
    </location>
</feature>
<feature type="topological domain" description="Extracellular" evidence="4">
    <location>
        <begin position="57"/>
        <end position="234"/>
    </location>
</feature>
<feature type="domain" description="THD" evidence="5">
    <location>
        <begin position="89"/>
        <end position="234"/>
    </location>
</feature>
<feature type="site" description="Cleavage; by SPPL2A or SPPL2B" evidence="1">
    <location>
        <begin position="34"/>
        <end position="35"/>
    </location>
</feature>
<feature type="site" description="Cleavage; by SPPL2A or SPPL2B" evidence="1">
    <location>
        <begin position="39"/>
        <end position="40"/>
    </location>
</feature>
<feature type="site" description="Cleavage; by SPPL2A or SPPL2B" evidence="1">
    <location>
        <begin position="49"/>
        <end position="50"/>
    </location>
</feature>
<feature type="site" description="Cleavage; by SPPL2A or SPPL2B" evidence="1">
    <location>
        <begin position="51"/>
        <end position="52"/>
    </location>
</feature>
<feature type="site" description="Cleavage; by ADAM17" evidence="1">
    <location>
        <begin position="76"/>
        <end position="77"/>
    </location>
</feature>
<feature type="modified residue" description="Phosphoserine; by CK1" evidence="1">
    <location>
        <position position="2"/>
    </location>
</feature>
<feature type="lipid moiety-binding region" description="N6-myristoyl lysine" evidence="2">
    <location>
        <position position="20"/>
    </location>
</feature>
<feature type="glycosylation site" description="O-linked (GalNAc...) serine; in soluble form" evidence="1">
    <location>
        <position position="81"/>
    </location>
</feature>
<feature type="disulfide bond" evidence="5">
    <location>
        <begin position="146"/>
        <end position="178"/>
    </location>
</feature>
<sequence>MSTKSMIRDVELAEEVLSEKAGGPQGSRSCLCLSLFSFLLVAGATTLFCLLHFGVIGPQREEQSPGGPSINSPLVQTLRSSSQASSNKPVAHVVADINSPGQLRWWDSYANALMANGVKLEDNQLVVPADGLYLIYSQVLFRGQGCPSTPLFLTHTISRIAVSYQTKVNILSAIKSPCHRETPEWAEAKPWYEPIYQGGVFQLEKGDRLSAEINLPDYLDYAESGQVYFGIIAL</sequence>
<reference key="1">
    <citation type="journal article" date="2007" name="Comp. Immunol. Microbiol. Infect. Dis.">
        <title>Molecular cloning, sequencing and phylogenetic analysis of inflammatory cytokines of swamp type buffalo contrasting with other bubaline breeds.</title>
        <authorList>
            <person name="Mingala C.N."/>
            <person name="Odbileg R."/>
            <person name="Konnai S."/>
            <person name="Ohashi K."/>
            <person name="Onuma M."/>
        </authorList>
    </citation>
    <scope>NUCLEOTIDE SEQUENCE [MRNA]</scope>
</reference>
<evidence type="ECO:0000250" key="1"/>
<evidence type="ECO:0000250" key="2">
    <source>
        <dbReference type="UniProtKB" id="P01375"/>
    </source>
</evidence>
<evidence type="ECO:0000250" key="3">
    <source>
        <dbReference type="UniProtKB" id="P06804"/>
    </source>
</evidence>
<evidence type="ECO:0000255" key="4"/>
<evidence type="ECO:0000255" key="5">
    <source>
        <dbReference type="PROSITE-ProRule" id="PRU01387"/>
    </source>
</evidence>
<evidence type="ECO:0000305" key="6"/>
<dbReference type="EMBL" id="AB246785">
    <property type="protein sequence ID" value="BAE76007.1"/>
    <property type="molecule type" value="mRNA"/>
</dbReference>
<dbReference type="RefSeq" id="XP_055430595.1">
    <property type="nucleotide sequence ID" value="XM_055574620.1"/>
</dbReference>
<dbReference type="SMR" id="Q2MH05"/>
<dbReference type="GlyCosmos" id="Q2MH05">
    <property type="glycosylation" value="1 site, No reported glycans"/>
</dbReference>
<dbReference type="GeneID" id="129647542"/>
<dbReference type="GO" id="GO:0009986">
    <property type="term" value="C:cell surface"/>
    <property type="evidence" value="ECO:0007669"/>
    <property type="project" value="TreeGrafter"/>
</dbReference>
<dbReference type="GO" id="GO:0005615">
    <property type="term" value="C:extracellular space"/>
    <property type="evidence" value="ECO:0007669"/>
    <property type="project" value="UniProtKB-KW"/>
</dbReference>
<dbReference type="GO" id="GO:0005886">
    <property type="term" value="C:plasma membrane"/>
    <property type="evidence" value="ECO:0007669"/>
    <property type="project" value="UniProtKB-SubCell"/>
</dbReference>
<dbReference type="GO" id="GO:0005125">
    <property type="term" value="F:cytokine activity"/>
    <property type="evidence" value="ECO:0007669"/>
    <property type="project" value="UniProtKB-KW"/>
</dbReference>
<dbReference type="GO" id="GO:0005164">
    <property type="term" value="F:tumor necrosis factor receptor binding"/>
    <property type="evidence" value="ECO:0007669"/>
    <property type="project" value="InterPro"/>
</dbReference>
<dbReference type="GO" id="GO:0008625">
    <property type="term" value="P:extrinsic apoptotic signaling pathway via death domain receptors"/>
    <property type="evidence" value="ECO:0007669"/>
    <property type="project" value="TreeGrafter"/>
</dbReference>
<dbReference type="GO" id="GO:0006955">
    <property type="term" value="P:immune response"/>
    <property type="evidence" value="ECO:0007669"/>
    <property type="project" value="InterPro"/>
</dbReference>
<dbReference type="GO" id="GO:0097527">
    <property type="term" value="P:necroptotic signaling pathway"/>
    <property type="evidence" value="ECO:0000250"/>
    <property type="project" value="CAFA"/>
</dbReference>
<dbReference type="GO" id="GO:0043242">
    <property type="term" value="P:negative regulation of protein-containing complex disassembly"/>
    <property type="evidence" value="ECO:0000250"/>
    <property type="project" value="UniProtKB"/>
</dbReference>
<dbReference type="GO" id="GO:0043065">
    <property type="term" value="P:positive regulation of apoptotic process"/>
    <property type="evidence" value="ECO:0000250"/>
    <property type="project" value="UniProtKB"/>
</dbReference>
<dbReference type="GO" id="GO:0043123">
    <property type="term" value="P:positive regulation of canonical NF-kappaB signal transduction"/>
    <property type="evidence" value="ECO:0007669"/>
    <property type="project" value="TreeGrafter"/>
</dbReference>
<dbReference type="GO" id="GO:2001238">
    <property type="term" value="P:positive regulation of extrinsic apoptotic signaling pathway"/>
    <property type="evidence" value="ECO:0007669"/>
    <property type="project" value="TreeGrafter"/>
</dbReference>
<dbReference type="GO" id="GO:0043507">
    <property type="term" value="P:positive regulation of JUN kinase activity"/>
    <property type="evidence" value="ECO:0000250"/>
    <property type="project" value="UniProtKB"/>
</dbReference>
<dbReference type="GO" id="GO:0043406">
    <property type="term" value="P:positive regulation of MAP kinase activity"/>
    <property type="evidence" value="ECO:0000250"/>
    <property type="project" value="UniProtKB"/>
</dbReference>
<dbReference type="GO" id="GO:0051092">
    <property type="term" value="P:positive regulation of NF-kappaB transcription factor activity"/>
    <property type="evidence" value="ECO:0000250"/>
    <property type="project" value="UniProtKB"/>
</dbReference>
<dbReference type="GO" id="GO:0001934">
    <property type="term" value="P:positive regulation of protein phosphorylation"/>
    <property type="evidence" value="ECO:0000250"/>
    <property type="project" value="UniProtKB"/>
</dbReference>
<dbReference type="GO" id="GO:0043243">
    <property type="term" value="P:positive regulation of protein-containing complex disassembly"/>
    <property type="evidence" value="ECO:0000250"/>
    <property type="project" value="UniProtKB"/>
</dbReference>
<dbReference type="GO" id="GO:0045944">
    <property type="term" value="P:positive regulation of transcription by RNA polymerase II"/>
    <property type="evidence" value="ECO:0007669"/>
    <property type="project" value="TreeGrafter"/>
</dbReference>
<dbReference type="GO" id="GO:0065008">
    <property type="term" value="P:regulation of biological quality"/>
    <property type="evidence" value="ECO:0007669"/>
    <property type="project" value="UniProtKB-ARBA"/>
</dbReference>
<dbReference type="GO" id="GO:0050793">
    <property type="term" value="P:regulation of developmental process"/>
    <property type="evidence" value="ECO:0007669"/>
    <property type="project" value="UniProtKB-ARBA"/>
</dbReference>
<dbReference type="GO" id="GO:0051239">
    <property type="term" value="P:regulation of multicellular organismal process"/>
    <property type="evidence" value="ECO:0007669"/>
    <property type="project" value="UniProtKB-ARBA"/>
</dbReference>
<dbReference type="GO" id="GO:0051046">
    <property type="term" value="P:regulation of secretion"/>
    <property type="evidence" value="ECO:0007669"/>
    <property type="project" value="UniProtKB-ARBA"/>
</dbReference>
<dbReference type="GO" id="GO:0033209">
    <property type="term" value="P:tumor necrosis factor-mediated signaling pathway"/>
    <property type="evidence" value="ECO:0007669"/>
    <property type="project" value="TreeGrafter"/>
</dbReference>
<dbReference type="GO" id="GO:0010573">
    <property type="term" value="P:vascular endothelial growth factor production"/>
    <property type="evidence" value="ECO:0000250"/>
    <property type="project" value="UniProtKB"/>
</dbReference>
<dbReference type="CDD" id="cd00184">
    <property type="entry name" value="TNF"/>
    <property type="match status" value="1"/>
</dbReference>
<dbReference type="FunFam" id="2.60.120.40:FF:000007">
    <property type="entry name" value="Tumor necrosis factor"/>
    <property type="match status" value="1"/>
</dbReference>
<dbReference type="Gene3D" id="2.60.120.40">
    <property type="match status" value="1"/>
</dbReference>
<dbReference type="InterPro" id="IPR006053">
    <property type="entry name" value="TNF"/>
</dbReference>
<dbReference type="InterPro" id="IPR002959">
    <property type="entry name" value="TNF_alpha"/>
</dbReference>
<dbReference type="InterPro" id="IPR021184">
    <property type="entry name" value="TNF_CS"/>
</dbReference>
<dbReference type="InterPro" id="IPR006052">
    <property type="entry name" value="TNF_dom"/>
</dbReference>
<dbReference type="InterPro" id="IPR008983">
    <property type="entry name" value="Tumour_necrosis_fac-like_dom"/>
</dbReference>
<dbReference type="PANTHER" id="PTHR11471:SF23">
    <property type="entry name" value="TUMOR NECROSIS FACTOR"/>
    <property type="match status" value="1"/>
</dbReference>
<dbReference type="PANTHER" id="PTHR11471">
    <property type="entry name" value="TUMOR NECROSIS FACTOR FAMILY MEMBER"/>
    <property type="match status" value="1"/>
</dbReference>
<dbReference type="Pfam" id="PF00229">
    <property type="entry name" value="TNF"/>
    <property type="match status" value="1"/>
</dbReference>
<dbReference type="PRINTS" id="PR01234">
    <property type="entry name" value="TNECROSISFCT"/>
</dbReference>
<dbReference type="PRINTS" id="PR01235">
    <property type="entry name" value="TNFALPHA"/>
</dbReference>
<dbReference type="SMART" id="SM00207">
    <property type="entry name" value="TNF"/>
    <property type="match status" value="1"/>
</dbReference>
<dbReference type="SUPFAM" id="SSF49842">
    <property type="entry name" value="TNF-like"/>
    <property type="match status" value="1"/>
</dbReference>
<dbReference type="PROSITE" id="PS00251">
    <property type="entry name" value="THD_1"/>
    <property type="match status" value="1"/>
</dbReference>
<dbReference type="PROSITE" id="PS50049">
    <property type="entry name" value="THD_2"/>
    <property type="match status" value="1"/>
</dbReference>
<accession>Q2MH05</accession>
<name>TNFA_BUBCA</name>
<keyword id="KW-1003">Cell membrane</keyword>
<keyword id="KW-0202">Cytokine</keyword>
<keyword id="KW-1015">Disulfide bond</keyword>
<keyword id="KW-0325">Glycoprotein</keyword>
<keyword id="KW-0449">Lipoprotein</keyword>
<keyword id="KW-0472">Membrane</keyword>
<keyword id="KW-0519">Myristate</keyword>
<keyword id="KW-0597">Phosphoprotein</keyword>
<keyword id="KW-0964">Secreted</keyword>
<keyword id="KW-0735">Signal-anchor</keyword>
<keyword id="KW-0812">Transmembrane</keyword>
<keyword id="KW-1133">Transmembrane helix</keyword>